<evidence type="ECO:0000255" key="1">
    <source>
        <dbReference type="HAMAP-Rule" id="MF_00454"/>
    </source>
</evidence>
<keyword id="KW-0997">Cell inner membrane</keyword>
<keyword id="KW-1003">Cell membrane</keyword>
<keyword id="KW-0407">Ion channel</keyword>
<keyword id="KW-0406">Ion transport</keyword>
<keyword id="KW-0472">Membrane</keyword>
<keyword id="KW-0479">Metal-binding</keyword>
<keyword id="KW-1185">Reference proteome</keyword>
<keyword id="KW-0915">Sodium</keyword>
<keyword id="KW-0812">Transmembrane</keyword>
<keyword id="KW-1133">Transmembrane helix</keyword>
<keyword id="KW-0813">Transport</keyword>
<accession>A3QEI9</accession>
<reference key="1">
    <citation type="submission" date="2007-03" db="EMBL/GenBank/DDBJ databases">
        <title>Complete sequence of Shewanella loihica PV-4.</title>
        <authorList>
            <consortium name="US DOE Joint Genome Institute"/>
            <person name="Copeland A."/>
            <person name="Lucas S."/>
            <person name="Lapidus A."/>
            <person name="Barry K."/>
            <person name="Detter J.C."/>
            <person name="Glavina del Rio T."/>
            <person name="Hammon N."/>
            <person name="Israni S."/>
            <person name="Dalin E."/>
            <person name="Tice H."/>
            <person name="Pitluck S."/>
            <person name="Chain P."/>
            <person name="Malfatti S."/>
            <person name="Shin M."/>
            <person name="Vergez L."/>
            <person name="Schmutz J."/>
            <person name="Larimer F."/>
            <person name="Land M."/>
            <person name="Hauser L."/>
            <person name="Kyrpides N."/>
            <person name="Mikhailova N."/>
            <person name="Romine M.F."/>
            <person name="Serres G."/>
            <person name="Fredrickson J."/>
            <person name="Tiedje J."/>
            <person name="Richardson P."/>
        </authorList>
    </citation>
    <scope>NUCLEOTIDE SEQUENCE [LARGE SCALE GENOMIC DNA]</scope>
    <source>
        <strain>ATCC BAA-1088 / PV-4</strain>
    </source>
</reference>
<comment type="function">
    <text evidence="1">Fluoride-specific ion channel. Important for reducing fluoride concentration in the cell, thus reducing its toxicity.</text>
</comment>
<comment type="catalytic activity">
    <reaction evidence="1">
        <text>fluoride(in) = fluoride(out)</text>
        <dbReference type="Rhea" id="RHEA:76159"/>
        <dbReference type="ChEBI" id="CHEBI:17051"/>
    </reaction>
    <physiologicalReaction direction="left-to-right" evidence="1">
        <dbReference type="Rhea" id="RHEA:76160"/>
    </physiologicalReaction>
</comment>
<comment type="activity regulation">
    <text evidence="1">Na(+) is not transported, but it plays an essential structural role and its presence is essential for fluoride channel function.</text>
</comment>
<comment type="subcellular location">
    <subcellularLocation>
        <location evidence="1">Cell inner membrane</location>
        <topology evidence="1">Multi-pass membrane protein</topology>
    </subcellularLocation>
</comment>
<comment type="similarity">
    <text evidence="1">Belongs to the fluoride channel Fluc/FEX (TC 1.A.43) family.</text>
</comment>
<sequence>MNNLIFVALGGSIGAVFRYLISIFMIQVFGSSFPFGTLMVNVIGSFLMGVIYALGEASQVSPEIKALVGVGLLGALTTFSTFSNETLLLMQQGAWLKAFTNIALNLCLCLFMVYLGQQLVFSRI</sequence>
<dbReference type="EMBL" id="CP000606">
    <property type="protein sequence ID" value="ABO23887.1"/>
    <property type="molecule type" value="Genomic_DNA"/>
</dbReference>
<dbReference type="RefSeq" id="WP_011865819.1">
    <property type="nucleotide sequence ID" value="NC_009092.1"/>
</dbReference>
<dbReference type="SMR" id="A3QEI9"/>
<dbReference type="STRING" id="323850.Shew_2021"/>
<dbReference type="KEGG" id="slo:Shew_2021"/>
<dbReference type="eggNOG" id="COG0239">
    <property type="taxonomic scope" value="Bacteria"/>
</dbReference>
<dbReference type="HOGENOM" id="CLU_114342_2_3_6"/>
<dbReference type="OrthoDB" id="9806299at2"/>
<dbReference type="Proteomes" id="UP000001558">
    <property type="component" value="Chromosome"/>
</dbReference>
<dbReference type="GO" id="GO:0005886">
    <property type="term" value="C:plasma membrane"/>
    <property type="evidence" value="ECO:0007669"/>
    <property type="project" value="UniProtKB-SubCell"/>
</dbReference>
<dbReference type="GO" id="GO:0062054">
    <property type="term" value="F:fluoride channel activity"/>
    <property type="evidence" value="ECO:0007669"/>
    <property type="project" value="UniProtKB-UniRule"/>
</dbReference>
<dbReference type="GO" id="GO:0046872">
    <property type="term" value="F:metal ion binding"/>
    <property type="evidence" value="ECO:0007669"/>
    <property type="project" value="UniProtKB-KW"/>
</dbReference>
<dbReference type="GO" id="GO:0140114">
    <property type="term" value="P:cellular detoxification of fluoride"/>
    <property type="evidence" value="ECO:0007669"/>
    <property type="project" value="UniProtKB-UniRule"/>
</dbReference>
<dbReference type="HAMAP" id="MF_00454">
    <property type="entry name" value="FluC"/>
    <property type="match status" value="1"/>
</dbReference>
<dbReference type="InterPro" id="IPR003691">
    <property type="entry name" value="FluC"/>
</dbReference>
<dbReference type="NCBIfam" id="TIGR00494">
    <property type="entry name" value="crcB"/>
    <property type="match status" value="1"/>
</dbReference>
<dbReference type="PANTHER" id="PTHR28259">
    <property type="entry name" value="FLUORIDE EXPORT PROTEIN 1-RELATED"/>
    <property type="match status" value="1"/>
</dbReference>
<dbReference type="PANTHER" id="PTHR28259:SF1">
    <property type="entry name" value="FLUORIDE EXPORT PROTEIN 1-RELATED"/>
    <property type="match status" value="1"/>
</dbReference>
<dbReference type="Pfam" id="PF02537">
    <property type="entry name" value="CRCB"/>
    <property type="match status" value="1"/>
</dbReference>
<proteinExistence type="inferred from homology"/>
<organism>
    <name type="scientific">Shewanella loihica (strain ATCC BAA-1088 / PV-4)</name>
    <dbReference type="NCBI Taxonomy" id="323850"/>
    <lineage>
        <taxon>Bacteria</taxon>
        <taxon>Pseudomonadati</taxon>
        <taxon>Pseudomonadota</taxon>
        <taxon>Gammaproteobacteria</taxon>
        <taxon>Alteromonadales</taxon>
        <taxon>Shewanellaceae</taxon>
        <taxon>Shewanella</taxon>
    </lineage>
</organism>
<feature type="chain" id="PRO_1000026417" description="Fluoride-specific ion channel FluC">
    <location>
        <begin position="1"/>
        <end position="124"/>
    </location>
</feature>
<feature type="transmembrane region" description="Helical" evidence="1">
    <location>
        <begin position="4"/>
        <end position="24"/>
    </location>
</feature>
<feature type="transmembrane region" description="Helical" evidence="1">
    <location>
        <begin position="35"/>
        <end position="55"/>
    </location>
</feature>
<feature type="transmembrane region" description="Helical" evidence="1">
    <location>
        <begin position="62"/>
        <end position="82"/>
    </location>
</feature>
<feature type="transmembrane region" description="Helical" evidence="1">
    <location>
        <begin position="102"/>
        <end position="122"/>
    </location>
</feature>
<feature type="binding site" evidence="1">
    <location>
        <position position="74"/>
    </location>
    <ligand>
        <name>Na(+)</name>
        <dbReference type="ChEBI" id="CHEBI:29101"/>
        <note>structural</note>
    </ligand>
</feature>
<feature type="binding site" evidence="1">
    <location>
        <position position="77"/>
    </location>
    <ligand>
        <name>Na(+)</name>
        <dbReference type="ChEBI" id="CHEBI:29101"/>
        <note>structural</note>
    </ligand>
</feature>
<protein>
    <recommendedName>
        <fullName evidence="1">Fluoride-specific ion channel FluC</fullName>
    </recommendedName>
</protein>
<name>FLUC_SHELP</name>
<gene>
    <name evidence="1" type="primary">fluC</name>
    <name evidence="1" type="synonym">crcB</name>
    <name type="ordered locus">Shew_2021</name>
</gene>